<protein>
    <recommendedName>
        <fullName>Putative gustatory receptor 59b</fullName>
    </recommendedName>
</protein>
<comment type="function">
    <text evidence="1">Probable gustatory receptor which mediates acceptance or avoidance behavior, depending on its substrates.</text>
</comment>
<comment type="subcellular location">
    <subcellularLocation>
        <location evidence="1">Cell membrane</location>
        <topology evidence="1">Multi-pass membrane protein</topology>
    </subcellularLocation>
</comment>
<comment type="similarity">
    <text evidence="3">Belongs to the insect chemoreceptor superfamily. Gustatory receptor (GR) family. Gr22e subfamily.</text>
</comment>
<keyword id="KW-1003">Cell membrane</keyword>
<keyword id="KW-0325">Glycoprotein</keyword>
<keyword id="KW-0472">Membrane</keyword>
<keyword id="KW-0675">Receptor</keyword>
<keyword id="KW-0807">Transducer</keyword>
<keyword id="KW-0812">Transmembrane</keyword>
<keyword id="KW-1133">Transmembrane helix</keyword>
<accession>Q8I1F0</accession>
<dbReference type="EMBL" id="AY190941">
    <property type="protein sequence ID" value="AAO01017.1"/>
    <property type="molecule type" value="Genomic_DNA"/>
</dbReference>
<dbReference type="SMR" id="Q8I1F0"/>
<dbReference type="GlyCosmos" id="Q8I1F0">
    <property type="glycosylation" value="1 site, No reported glycans"/>
</dbReference>
<dbReference type="eggNOG" id="ENOG502TATR">
    <property type="taxonomic scope" value="Eukaryota"/>
</dbReference>
<dbReference type="OrthoDB" id="7835106at2759"/>
<dbReference type="GO" id="GO:0005886">
    <property type="term" value="C:plasma membrane"/>
    <property type="evidence" value="ECO:0007669"/>
    <property type="project" value="UniProtKB-SubCell"/>
</dbReference>
<dbReference type="GO" id="GO:0050909">
    <property type="term" value="P:sensory perception of taste"/>
    <property type="evidence" value="ECO:0007669"/>
    <property type="project" value="InterPro"/>
</dbReference>
<dbReference type="GO" id="GO:0007165">
    <property type="term" value="P:signal transduction"/>
    <property type="evidence" value="ECO:0007669"/>
    <property type="project" value="UniProtKB-KW"/>
</dbReference>
<dbReference type="InterPro" id="IPR013604">
    <property type="entry name" value="7TM_chemorcpt"/>
</dbReference>
<dbReference type="Pfam" id="PF08395">
    <property type="entry name" value="7tm_7"/>
    <property type="match status" value="2"/>
</dbReference>
<proteinExistence type="inferred from homology"/>
<feature type="chain" id="PRO_0000216521" description="Putative gustatory receptor 59b">
    <location>
        <begin position="1"/>
        <end position="587"/>
    </location>
</feature>
<feature type="topological domain" description="Cytoplasmic" evidence="1">
    <location>
        <begin position="1"/>
        <end position="4"/>
    </location>
</feature>
<feature type="transmembrane region" description="Helical; Name=1" evidence="2">
    <location>
        <begin position="5"/>
        <end position="25"/>
    </location>
</feature>
<feature type="topological domain" description="Extracellular" evidence="1">
    <location>
        <begin position="26"/>
        <end position="62"/>
    </location>
</feature>
<feature type="transmembrane region" description="Helical; Name=2" evidence="2">
    <location>
        <begin position="63"/>
        <end position="83"/>
    </location>
</feature>
<feature type="topological domain" description="Cytoplasmic" evidence="1">
    <location>
        <begin position="84"/>
        <end position="97"/>
    </location>
</feature>
<feature type="transmembrane region" description="Helical; Name=3" evidence="2">
    <location>
        <begin position="98"/>
        <end position="118"/>
    </location>
</feature>
<feature type="topological domain" description="Extracellular" evidence="1">
    <location>
        <begin position="119"/>
        <end position="277"/>
    </location>
</feature>
<feature type="transmembrane region" description="Helical; Name=4" evidence="2">
    <location>
        <begin position="278"/>
        <end position="298"/>
    </location>
</feature>
<feature type="topological domain" description="Cytoplasmic" evidence="1">
    <location>
        <begin position="299"/>
        <end position="309"/>
    </location>
</feature>
<feature type="transmembrane region" description="Helical; Name=5" evidence="2">
    <location>
        <begin position="310"/>
        <end position="330"/>
    </location>
</feature>
<feature type="topological domain" description="Extracellular" evidence="1">
    <location>
        <begin position="331"/>
        <end position="403"/>
    </location>
</feature>
<feature type="transmembrane region" description="Helical; Name=6" evidence="2">
    <location>
        <begin position="404"/>
        <end position="424"/>
    </location>
</feature>
<feature type="topological domain" description="Cytoplasmic" evidence="1">
    <location>
        <begin position="425"/>
        <end position="518"/>
    </location>
</feature>
<feature type="transmembrane region" description="Helical; Name=7" evidence="2">
    <location>
        <begin position="519"/>
        <end position="539"/>
    </location>
</feature>
<feature type="topological domain" description="Extracellular" evidence="1">
    <location>
        <begin position="540"/>
        <end position="587"/>
    </location>
</feature>
<feature type="glycosylation site" description="N-linked (GlcNAc...) asparagine" evidence="2">
    <location>
        <position position="159"/>
    </location>
</feature>
<organism>
    <name type="scientific">Drosophila erecta</name>
    <name type="common">Fruit fly</name>
    <dbReference type="NCBI Taxonomy" id="7220"/>
    <lineage>
        <taxon>Eukaryota</taxon>
        <taxon>Metazoa</taxon>
        <taxon>Ecdysozoa</taxon>
        <taxon>Arthropoda</taxon>
        <taxon>Hexapoda</taxon>
        <taxon>Insecta</taxon>
        <taxon>Pterygota</taxon>
        <taxon>Neoptera</taxon>
        <taxon>Endopterygota</taxon>
        <taxon>Diptera</taxon>
        <taxon>Brachycera</taxon>
        <taxon>Muscomorpha</taxon>
        <taxon>Ephydroidea</taxon>
        <taxon>Drosophilidae</taxon>
        <taxon>Drosophila</taxon>
        <taxon>Sophophora</taxon>
    </lineage>
</organism>
<name>G59B_DROER</name>
<evidence type="ECO:0000250" key="1"/>
<evidence type="ECO:0000255" key="2"/>
<evidence type="ECO:0000305" key="3"/>
<evidence type="ECO:0000312" key="4">
    <source>
        <dbReference type="EMBL" id="AAO01017.1"/>
    </source>
</evidence>
<reference evidence="4" key="1">
    <citation type="journal article" date="2002" name="Genome Biol.">
        <title>Assessing the impact of comparative genomic sequence data on the functional annotation of the Drosophila genome.</title>
        <authorList>
            <person name="Bergman C.M."/>
            <person name="Pfeiffer B.D."/>
            <person name="Rincon-Limas D.E."/>
            <person name="Hoskins R.A."/>
            <person name="Gnirke A."/>
            <person name="Mungall C.J."/>
            <person name="Wang A.M."/>
            <person name="Kronmiller B."/>
            <person name="Pacleb J.M."/>
            <person name="Park S."/>
            <person name="Stapleton M."/>
            <person name="Wan K.H."/>
            <person name="George R.A."/>
            <person name="de Jong P.J."/>
            <person name="Botas J."/>
            <person name="Rubin G.M."/>
            <person name="Celniker S.E."/>
        </authorList>
    </citation>
    <scope>NUCLEOTIDE SEQUENCE [GENOMIC DNA]</scope>
</reference>
<sequence>MPSYMAFTPYIMFSTNYAAIAYILISRCYRDSMLLDLQRITLEVNREMLRTGKKMNSLIRRMFFLKTFTLTYSCLSYILAVLVYQWRAQNWSNLFNGLLVNISLTILVVTTFFYFVSLMHVARGFDFVNQQLEDIVSSQSMDLKKKAHELRSLWALHSNLSNTARRINKHYGPQMLALRFDYFIFSVINCCIGTIYSNSDQESSFEKFFGSLLYWARSVDFFLNDYICNLVTEYQSQPKFFAPEGSMTNELSSYLIYESSTRLDLLVCGLYPVNKAKWLEMVASIVVHSIMLFQFHLVMRGGYTTLFSRTYALLANIITLTMLPIVMWQVRSVFLAKRHYPQLILITNDIRYTVSFLIILYTLLSRGFRDTALKEMQPLLLTLFREEKRCGYKGIDGVRRSLRILLFVKFFTLSWLCITDIIFLFYSSDAVIWVNIARFLFLSNTNNILEMVPMGYFLALWHIARGFDCVNRRLDQIVKSKSTRDQKELQHLWFLHTCLTKTALNINKIYAPQMLATRFDHFVIGVIQAYWGAVFTFDLSTSFLWVVYGSVQYHVRSLDYYLIDYMCDVAVEYHDSARHSWSEKECY</sequence>
<gene>
    <name evidence="4" type="primary">Gr59b</name>
</gene>